<organism>
    <name type="scientific">Stenotrophomonas maltophilia (strain R551-3)</name>
    <dbReference type="NCBI Taxonomy" id="391008"/>
    <lineage>
        <taxon>Bacteria</taxon>
        <taxon>Pseudomonadati</taxon>
        <taxon>Pseudomonadota</taxon>
        <taxon>Gammaproteobacteria</taxon>
        <taxon>Lysobacterales</taxon>
        <taxon>Lysobacteraceae</taxon>
        <taxon>Stenotrophomonas</taxon>
        <taxon>Stenotrophomonas maltophilia group</taxon>
    </lineage>
</organism>
<sequence>MSSYLFTSESVSEGHPDKVADQISDAVLDAILTQDQRARVACETMVKTGVAIVAGEITTSAWIDLEALTRKVIVDIGYDSSDVGFDGATCGVLNLIGKQSPHIAQGVDRKKPEEMGAGDQGLMFGYATNETDSYMPAAIHLSHRLVEQQAKIRKKKNSPLSWLRPDAKSQVTLRYENGVVSAIDAVVLSTQHAPGIKQKDLIEAVREEIIKPVLPAKWLHKGTKFHINPTGKFEIGGPVGDCGLTGRKIIVDTYGGWARHGGGAFSGKDPSKVDRSAAYAARYVAKNVVAAGLADRCEVQVSYAIGVAEPTSISVTTFGTGKISDDKIEKLIRKHFDLRPYGIIKMLDLVHPMYQQTAAYGHFGRKPKEFSYLNGEGETVNATAFSWEKTDRAAALRADAKLK</sequence>
<dbReference type="EC" id="2.5.1.6" evidence="1"/>
<dbReference type="EMBL" id="CP001111">
    <property type="protein sequence ID" value="ACF50335.1"/>
    <property type="molecule type" value="Genomic_DNA"/>
</dbReference>
<dbReference type="RefSeq" id="WP_012510070.1">
    <property type="nucleotide sequence ID" value="NC_011071.1"/>
</dbReference>
<dbReference type="SMR" id="B4SK03"/>
<dbReference type="STRING" id="391008.Smal_0630"/>
<dbReference type="KEGG" id="smt:Smal_0630"/>
<dbReference type="eggNOG" id="COG0192">
    <property type="taxonomic scope" value="Bacteria"/>
</dbReference>
<dbReference type="HOGENOM" id="CLU_041802_1_1_6"/>
<dbReference type="OrthoDB" id="9801686at2"/>
<dbReference type="UniPathway" id="UPA00315">
    <property type="reaction ID" value="UER00080"/>
</dbReference>
<dbReference type="Proteomes" id="UP000001867">
    <property type="component" value="Chromosome"/>
</dbReference>
<dbReference type="GO" id="GO:0005737">
    <property type="term" value="C:cytoplasm"/>
    <property type="evidence" value="ECO:0007669"/>
    <property type="project" value="UniProtKB-SubCell"/>
</dbReference>
<dbReference type="GO" id="GO:0005524">
    <property type="term" value="F:ATP binding"/>
    <property type="evidence" value="ECO:0007669"/>
    <property type="project" value="UniProtKB-UniRule"/>
</dbReference>
<dbReference type="GO" id="GO:0000287">
    <property type="term" value="F:magnesium ion binding"/>
    <property type="evidence" value="ECO:0007669"/>
    <property type="project" value="UniProtKB-UniRule"/>
</dbReference>
<dbReference type="GO" id="GO:0004478">
    <property type="term" value="F:methionine adenosyltransferase activity"/>
    <property type="evidence" value="ECO:0007669"/>
    <property type="project" value="UniProtKB-UniRule"/>
</dbReference>
<dbReference type="GO" id="GO:0006730">
    <property type="term" value="P:one-carbon metabolic process"/>
    <property type="evidence" value="ECO:0007669"/>
    <property type="project" value="UniProtKB-KW"/>
</dbReference>
<dbReference type="GO" id="GO:0006556">
    <property type="term" value="P:S-adenosylmethionine biosynthetic process"/>
    <property type="evidence" value="ECO:0007669"/>
    <property type="project" value="UniProtKB-UniRule"/>
</dbReference>
<dbReference type="CDD" id="cd18079">
    <property type="entry name" value="S-AdoMet_synt"/>
    <property type="match status" value="1"/>
</dbReference>
<dbReference type="FunFam" id="3.30.300.10:FF:000003">
    <property type="entry name" value="S-adenosylmethionine synthase"/>
    <property type="match status" value="1"/>
</dbReference>
<dbReference type="FunFam" id="3.30.300.10:FF:000004">
    <property type="entry name" value="S-adenosylmethionine synthase"/>
    <property type="match status" value="1"/>
</dbReference>
<dbReference type="Gene3D" id="3.30.300.10">
    <property type="match status" value="3"/>
</dbReference>
<dbReference type="HAMAP" id="MF_00086">
    <property type="entry name" value="S_AdoMet_synth1"/>
    <property type="match status" value="1"/>
</dbReference>
<dbReference type="InterPro" id="IPR022631">
    <property type="entry name" value="ADOMET_SYNTHASE_CS"/>
</dbReference>
<dbReference type="InterPro" id="IPR022630">
    <property type="entry name" value="S-AdoMet_synt_C"/>
</dbReference>
<dbReference type="InterPro" id="IPR022629">
    <property type="entry name" value="S-AdoMet_synt_central"/>
</dbReference>
<dbReference type="InterPro" id="IPR022628">
    <property type="entry name" value="S-AdoMet_synt_N"/>
</dbReference>
<dbReference type="InterPro" id="IPR002133">
    <property type="entry name" value="S-AdoMet_synthetase"/>
</dbReference>
<dbReference type="InterPro" id="IPR022636">
    <property type="entry name" value="S-AdoMet_synthetase_sfam"/>
</dbReference>
<dbReference type="NCBIfam" id="TIGR01034">
    <property type="entry name" value="metK"/>
    <property type="match status" value="1"/>
</dbReference>
<dbReference type="PANTHER" id="PTHR11964">
    <property type="entry name" value="S-ADENOSYLMETHIONINE SYNTHETASE"/>
    <property type="match status" value="1"/>
</dbReference>
<dbReference type="Pfam" id="PF02773">
    <property type="entry name" value="S-AdoMet_synt_C"/>
    <property type="match status" value="1"/>
</dbReference>
<dbReference type="Pfam" id="PF02772">
    <property type="entry name" value="S-AdoMet_synt_M"/>
    <property type="match status" value="1"/>
</dbReference>
<dbReference type="Pfam" id="PF00438">
    <property type="entry name" value="S-AdoMet_synt_N"/>
    <property type="match status" value="1"/>
</dbReference>
<dbReference type="PIRSF" id="PIRSF000497">
    <property type="entry name" value="MAT"/>
    <property type="match status" value="1"/>
</dbReference>
<dbReference type="SUPFAM" id="SSF55973">
    <property type="entry name" value="S-adenosylmethionine synthetase"/>
    <property type="match status" value="3"/>
</dbReference>
<dbReference type="PROSITE" id="PS00376">
    <property type="entry name" value="ADOMET_SYNTHASE_1"/>
    <property type="match status" value="1"/>
</dbReference>
<dbReference type="PROSITE" id="PS00377">
    <property type="entry name" value="ADOMET_SYNTHASE_2"/>
    <property type="match status" value="1"/>
</dbReference>
<name>METK_STRM5</name>
<gene>
    <name evidence="1" type="primary">metK</name>
    <name type="ordered locus">Smal_0630</name>
</gene>
<reference key="1">
    <citation type="submission" date="2008-06" db="EMBL/GenBank/DDBJ databases">
        <title>Complete sequence of Stenotrophomonas maltophilia R551-3.</title>
        <authorList>
            <consortium name="US DOE Joint Genome Institute"/>
            <person name="Lucas S."/>
            <person name="Copeland A."/>
            <person name="Lapidus A."/>
            <person name="Glavina del Rio T."/>
            <person name="Dalin E."/>
            <person name="Tice H."/>
            <person name="Pitluck S."/>
            <person name="Chain P."/>
            <person name="Malfatti S."/>
            <person name="Shin M."/>
            <person name="Vergez L."/>
            <person name="Lang D."/>
            <person name="Schmutz J."/>
            <person name="Larimer F."/>
            <person name="Land M."/>
            <person name="Hauser L."/>
            <person name="Kyrpides N."/>
            <person name="Mikhailova N."/>
            <person name="Taghavi S."/>
            <person name="Monchy S."/>
            <person name="Newman L."/>
            <person name="Vangronsveld J."/>
            <person name="van der Lelie D."/>
            <person name="Richardson P."/>
        </authorList>
    </citation>
    <scope>NUCLEOTIDE SEQUENCE [LARGE SCALE GENOMIC DNA]</scope>
    <source>
        <strain>R551-3</strain>
    </source>
</reference>
<evidence type="ECO:0000255" key="1">
    <source>
        <dbReference type="HAMAP-Rule" id="MF_00086"/>
    </source>
</evidence>
<keyword id="KW-0067">ATP-binding</keyword>
<keyword id="KW-0963">Cytoplasm</keyword>
<keyword id="KW-0460">Magnesium</keyword>
<keyword id="KW-0479">Metal-binding</keyword>
<keyword id="KW-0547">Nucleotide-binding</keyword>
<keyword id="KW-0554">One-carbon metabolism</keyword>
<keyword id="KW-0630">Potassium</keyword>
<keyword id="KW-0808">Transferase</keyword>
<protein>
    <recommendedName>
        <fullName evidence="1">S-adenosylmethionine synthase</fullName>
        <shortName evidence="1">AdoMet synthase</shortName>
        <ecNumber evidence="1">2.5.1.6</ecNumber>
    </recommendedName>
    <alternativeName>
        <fullName evidence="1">MAT</fullName>
    </alternativeName>
    <alternativeName>
        <fullName evidence="1">Methionine adenosyltransferase</fullName>
    </alternativeName>
</protein>
<comment type="function">
    <text evidence="1">Catalyzes the formation of S-adenosylmethionine (AdoMet) from methionine and ATP. The overall synthetic reaction is composed of two sequential steps, AdoMet formation and the subsequent tripolyphosphate hydrolysis which occurs prior to release of AdoMet from the enzyme.</text>
</comment>
<comment type="catalytic activity">
    <reaction evidence="1">
        <text>L-methionine + ATP + H2O = S-adenosyl-L-methionine + phosphate + diphosphate</text>
        <dbReference type="Rhea" id="RHEA:21080"/>
        <dbReference type="ChEBI" id="CHEBI:15377"/>
        <dbReference type="ChEBI" id="CHEBI:30616"/>
        <dbReference type="ChEBI" id="CHEBI:33019"/>
        <dbReference type="ChEBI" id="CHEBI:43474"/>
        <dbReference type="ChEBI" id="CHEBI:57844"/>
        <dbReference type="ChEBI" id="CHEBI:59789"/>
        <dbReference type="EC" id="2.5.1.6"/>
    </reaction>
</comment>
<comment type="cofactor">
    <cofactor evidence="1">
        <name>Mg(2+)</name>
        <dbReference type="ChEBI" id="CHEBI:18420"/>
    </cofactor>
    <text evidence="1">Binds 2 divalent ions per subunit.</text>
</comment>
<comment type="cofactor">
    <cofactor evidence="1">
        <name>K(+)</name>
        <dbReference type="ChEBI" id="CHEBI:29103"/>
    </cofactor>
    <text evidence="1">Binds 1 potassium ion per subunit.</text>
</comment>
<comment type="pathway">
    <text evidence="1">Amino-acid biosynthesis; S-adenosyl-L-methionine biosynthesis; S-adenosyl-L-methionine from L-methionine: step 1/1.</text>
</comment>
<comment type="subunit">
    <text evidence="1">Homotetramer; dimer of dimers.</text>
</comment>
<comment type="subcellular location">
    <subcellularLocation>
        <location evidence="1">Cytoplasm</location>
    </subcellularLocation>
</comment>
<comment type="similarity">
    <text evidence="1">Belongs to the AdoMet synthase family.</text>
</comment>
<proteinExistence type="inferred from homology"/>
<feature type="chain" id="PRO_1000093089" description="S-adenosylmethionine synthase">
    <location>
        <begin position="1"/>
        <end position="403"/>
    </location>
</feature>
<feature type="region of interest" description="Flexible loop" evidence="1">
    <location>
        <begin position="99"/>
        <end position="109"/>
    </location>
</feature>
<feature type="binding site" description="in other chain" evidence="1">
    <location>
        <position position="15"/>
    </location>
    <ligand>
        <name>ATP</name>
        <dbReference type="ChEBI" id="CHEBI:30616"/>
        <note>ligand shared between two neighboring subunits</note>
    </ligand>
</feature>
<feature type="binding site" evidence="1">
    <location>
        <position position="17"/>
    </location>
    <ligand>
        <name>Mg(2+)</name>
        <dbReference type="ChEBI" id="CHEBI:18420"/>
    </ligand>
</feature>
<feature type="binding site" evidence="1">
    <location>
        <position position="43"/>
    </location>
    <ligand>
        <name>K(+)</name>
        <dbReference type="ChEBI" id="CHEBI:29103"/>
    </ligand>
</feature>
<feature type="binding site" description="in other chain" evidence="1">
    <location>
        <position position="56"/>
    </location>
    <ligand>
        <name>L-methionine</name>
        <dbReference type="ChEBI" id="CHEBI:57844"/>
        <note>ligand shared between two neighboring subunits</note>
    </ligand>
</feature>
<feature type="binding site" description="in other chain" evidence="1">
    <location>
        <position position="99"/>
    </location>
    <ligand>
        <name>L-methionine</name>
        <dbReference type="ChEBI" id="CHEBI:57844"/>
        <note>ligand shared between two neighboring subunits</note>
    </ligand>
</feature>
<feature type="binding site" description="in other chain" evidence="1">
    <location>
        <begin position="166"/>
        <end position="168"/>
    </location>
    <ligand>
        <name>ATP</name>
        <dbReference type="ChEBI" id="CHEBI:30616"/>
        <note>ligand shared between two neighboring subunits</note>
    </ligand>
</feature>
<feature type="binding site" description="in other chain" evidence="1">
    <location>
        <begin position="232"/>
        <end position="233"/>
    </location>
    <ligand>
        <name>ATP</name>
        <dbReference type="ChEBI" id="CHEBI:30616"/>
        <note>ligand shared between two neighboring subunits</note>
    </ligand>
</feature>
<feature type="binding site" evidence="1">
    <location>
        <position position="241"/>
    </location>
    <ligand>
        <name>ATP</name>
        <dbReference type="ChEBI" id="CHEBI:30616"/>
        <note>ligand shared between two neighboring subunits</note>
    </ligand>
</feature>
<feature type="binding site" evidence="1">
    <location>
        <position position="241"/>
    </location>
    <ligand>
        <name>L-methionine</name>
        <dbReference type="ChEBI" id="CHEBI:57844"/>
        <note>ligand shared between two neighboring subunits</note>
    </ligand>
</feature>
<feature type="binding site" description="in other chain" evidence="1">
    <location>
        <begin position="247"/>
        <end position="248"/>
    </location>
    <ligand>
        <name>ATP</name>
        <dbReference type="ChEBI" id="CHEBI:30616"/>
        <note>ligand shared between two neighboring subunits</note>
    </ligand>
</feature>
<feature type="binding site" evidence="1">
    <location>
        <position position="264"/>
    </location>
    <ligand>
        <name>ATP</name>
        <dbReference type="ChEBI" id="CHEBI:30616"/>
        <note>ligand shared between two neighboring subunits</note>
    </ligand>
</feature>
<feature type="binding site" evidence="1">
    <location>
        <position position="268"/>
    </location>
    <ligand>
        <name>ATP</name>
        <dbReference type="ChEBI" id="CHEBI:30616"/>
        <note>ligand shared between two neighboring subunits</note>
    </ligand>
</feature>
<feature type="binding site" description="in other chain" evidence="1">
    <location>
        <position position="272"/>
    </location>
    <ligand>
        <name>L-methionine</name>
        <dbReference type="ChEBI" id="CHEBI:57844"/>
        <note>ligand shared between two neighboring subunits</note>
    </ligand>
</feature>
<accession>B4SK03</accession>